<reference key="1">
    <citation type="journal article" date="2000" name="Nucleic Acids Res.">
        <title>Molecular characterisation of RecQ homologues in Arabidopsis thaliana.</title>
        <authorList>
            <person name="Hartung F."/>
            <person name="Plchova H."/>
            <person name="Puchta H."/>
        </authorList>
    </citation>
    <scope>NUCLEOTIDE SEQUENCE [MRNA]</scope>
    <scope>TISSUE SPECIFICITY</scope>
    <source>
        <strain>cv. Columbia</strain>
        <tissue>Flower</tissue>
    </source>
</reference>
<reference key="2">
    <citation type="journal article" date="2000" name="Nature">
        <title>Sequence and analysis of chromosome 3 of the plant Arabidopsis thaliana.</title>
        <authorList>
            <person name="Salanoubat M."/>
            <person name="Lemcke K."/>
            <person name="Rieger M."/>
            <person name="Ansorge W."/>
            <person name="Unseld M."/>
            <person name="Fartmann B."/>
            <person name="Valle G."/>
            <person name="Bloecker H."/>
            <person name="Perez-Alonso M."/>
            <person name="Obermaier B."/>
            <person name="Delseny M."/>
            <person name="Boutry M."/>
            <person name="Grivell L.A."/>
            <person name="Mache R."/>
            <person name="Puigdomenech P."/>
            <person name="De Simone V."/>
            <person name="Choisne N."/>
            <person name="Artiguenave F."/>
            <person name="Robert C."/>
            <person name="Brottier P."/>
            <person name="Wincker P."/>
            <person name="Cattolico L."/>
            <person name="Weissenbach J."/>
            <person name="Saurin W."/>
            <person name="Quetier F."/>
            <person name="Schaefer M."/>
            <person name="Mueller-Auer S."/>
            <person name="Gabel C."/>
            <person name="Fuchs M."/>
            <person name="Benes V."/>
            <person name="Wurmbach E."/>
            <person name="Drzonek H."/>
            <person name="Erfle H."/>
            <person name="Jordan N."/>
            <person name="Bangert S."/>
            <person name="Wiedelmann R."/>
            <person name="Kranz H."/>
            <person name="Voss H."/>
            <person name="Holland R."/>
            <person name="Brandt P."/>
            <person name="Nyakatura G."/>
            <person name="Vezzi A."/>
            <person name="D'Angelo M."/>
            <person name="Pallavicini A."/>
            <person name="Toppo S."/>
            <person name="Simionati B."/>
            <person name="Conrad A."/>
            <person name="Hornischer K."/>
            <person name="Kauer G."/>
            <person name="Loehnert T.-H."/>
            <person name="Nordsiek G."/>
            <person name="Reichelt J."/>
            <person name="Scharfe M."/>
            <person name="Schoen O."/>
            <person name="Bargues M."/>
            <person name="Terol J."/>
            <person name="Climent J."/>
            <person name="Navarro P."/>
            <person name="Collado C."/>
            <person name="Perez-Perez A."/>
            <person name="Ottenwaelder B."/>
            <person name="Duchemin D."/>
            <person name="Cooke R."/>
            <person name="Laudie M."/>
            <person name="Berger-Llauro C."/>
            <person name="Purnelle B."/>
            <person name="Masuy D."/>
            <person name="de Haan M."/>
            <person name="Maarse A.C."/>
            <person name="Alcaraz J.-P."/>
            <person name="Cottet A."/>
            <person name="Casacuberta E."/>
            <person name="Monfort A."/>
            <person name="Argiriou A."/>
            <person name="Flores M."/>
            <person name="Liguori R."/>
            <person name="Vitale D."/>
            <person name="Mannhaupt G."/>
            <person name="Haase D."/>
            <person name="Schoof H."/>
            <person name="Rudd S."/>
            <person name="Zaccaria P."/>
            <person name="Mewes H.-W."/>
            <person name="Mayer K.F.X."/>
            <person name="Kaul S."/>
            <person name="Town C.D."/>
            <person name="Koo H.L."/>
            <person name="Tallon L.J."/>
            <person name="Jenkins J."/>
            <person name="Rooney T."/>
            <person name="Rizzo M."/>
            <person name="Walts A."/>
            <person name="Utterback T."/>
            <person name="Fujii C.Y."/>
            <person name="Shea T.P."/>
            <person name="Creasy T.H."/>
            <person name="Haas B."/>
            <person name="Maiti R."/>
            <person name="Wu D."/>
            <person name="Peterson J."/>
            <person name="Van Aken S."/>
            <person name="Pai G."/>
            <person name="Militscher J."/>
            <person name="Sellers P."/>
            <person name="Gill J.E."/>
            <person name="Feldblyum T.V."/>
            <person name="Preuss D."/>
            <person name="Lin X."/>
            <person name="Nierman W.C."/>
            <person name="Salzberg S.L."/>
            <person name="White O."/>
            <person name="Venter J.C."/>
            <person name="Fraser C.M."/>
            <person name="Kaneko T."/>
            <person name="Nakamura Y."/>
            <person name="Sato S."/>
            <person name="Kato T."/>
            <person name="Asamizu E."/>
            <person name="Sasamoto S."/>
            <person name="Kimura T."/>
            <person name="Idesawa K."/>
            <person name="Kawashima K."/>
            <person name="Kishida Y."/>
            <person name="Kiyokawa C."/>
            <person name="Kohara M."/>
            <person name="Matsumoto M."/>
            <person name="Matsuno A."/>
            <person name="Muraki A."/>
            <person name="Nakayama S."/>
            <person name="Nakazaki N."/>
            <person name="Shinpo S."/>
            <person name="Takeuchi C."/>
            <person name="Wada T."/>
            <person name="Watanabe A."/>
            <person name="Yamada M."/>
            <person name="Yasuda M."/>
            <person name="Tabata S."/>
        </authorList>
    </citation>
    <scope>NUCLEOTIDE SEQUENCE [LARGE SCALE GENOMIC DNA]</scope>
    <source>
        <strain>cv. Columbia</strain>
    </source>
</reference>
<reference key="3">
    <citation type="journal article" date="2017" name="Plant J.">
        <title>Araport11: a complete reannotation of the Arabidopsis thaliana reference genome.</title>
        <authorList>
            <person name="Cheng C.Y."/>
            <person name="Krishnakumar V."/>
            <person name="Chan A.P."/>
            <person name="Thibaud-Nissen F."/>
            <person name="Schobel S."/>
            <person name="Town C.D."/>
        </authorList>
    </citation>
    <scope>GENOME REANNOTATION</scope>
    <source>
        <strain>cv. Columbia</strain>
    </source>
</reference>
<reference key="4">
    <citation type="journal article" date="2003" name="Plant Mol. Biol.">
        <title>Arabidopsis RecQsim, a plant-specific member of the RecQ helicase family, can suppress the MMS hypersensitivity of the yeast sgs1 mutant.</title>
        <authorList>
            <person name="Bagherieh-Najjar M.B."/>
            <person name="de Vries O.M."/>
            <person name="Kroon J.T."/>
            <person name="Wright E.L."/>
            <person name="Elborough K.M."/>
            <person name="Hille J."/>
            <person name="Dijkwel P.P."/>
        </authorList>
    </citation>
    <scope>TISSUE SPECIFICITY</scope>
    <scope>INDUCTION BY ABIOTIC STRESSES</scope>
</reference>
<reference key="5">
    <citation type="journal article" date="2006" name="J. Plant Physiol.">
        <title>The RecQ gene family in plants.</title>
        <authorList>
            <person name="Hartung F."/>
            <person name="Puchta H."/>
        </authorList>
    </citation>
    <scope>GENE FAMILY</scope>
    <scope>NOMENCLATURE</scope>
</reference>
<reference key="6">
    <citation type="journal article" date="2013" name="PLoS ONE">
        <title>Genome-wide comparative in silico analysis of the RNA helicase gene family in Zea mays and Glycine max: a comparison with Arabidopsis and Oryza sativa.</title>
        <authorList>
            <person name="Xu R."/>
            <person name="Zhang S."/>
            <person name="Huang J."/>
            <person name="Zheng C."/>
        </authorList>
    </citation>
    <scope>GENE FAMILY</scope>
</reference>
<gene>
    <name type="primary">RECQL1</name>
    <name type="synonym">RECQ1</name>
    <name type="synonym">RQL1</name>
    <name type="ordered locus">At3g05740</name>
    <name type="ORF">F10A16.2</name>
</gene>
<organism>
    <name type="scientific">Arabidopsis thaliana</name>
    <name type="common">Mouse-ear cress</name>
    <dbReference type="NCBI Taxonomy" id="3702"/>
    <lineage>
        <taxon>Eukaryota</taxon>
        <taxon>Viridiplantae</taxon>
        <taxon>Streptophyta</taxon>
        <taxon>Embryophyta</taxon>
        <taxon>Tracheophyta</taxon>
        <taxon>Spermatophyta</taxon>
        <taxon>Magnoliopsida</taxon>
        <taxon>eudicotyledons</taxon>
        <taxon>Gunneridae</taxon>
        <taxon>Pentapetalae</taxon>
        <taxon>rosids</taxon>
        <taxon>malvids</taxon>
        <taxon>Brassicales</taxon>
        <taxon>Brassicaceae</taxon>
        <taxon>Camelineae</taxon>
        <taxon>Arabidopsis</taxon>
    </lineage>
</organism>
<dbReference type="EC" id="5.6.2.4" evidence="2"/>
<dbReference type="EMBL" id="AJ404470">
    <property type="protein sequence ID" value="CAC14163.1"/>
    <property type="molecule type" value="mRNA"/>
</dbReference>
<dbReference type="EMBL" id="AC012393">
    <property type="protein sequence ID" value="AAF26076.1"/>
    <property type="status" value="ALT_SEQ"/>
    <property type="molecule type" value="Genomic_DNA"/>
</dbReference>
<dbReference type="EMBL" id="CP002686">
    <property type="protein sequence ID" value="AEE74288.1"/>
    <property type="molecule type" value="Genomic_DNA"/>
</dbReference>
<dbReference type="SMR" id="Q9FT74"/>
<dbReference type="FunCoup" id="Q9FT74">
    <property type="interactions" value="143"/>
</dbReference>
<dbReference type="STRING" id="3702.Q9FT74"/>
<dbReference type="iPTMnet" id="Q9FT74"/>
<dbReference type="PaxDb" id="3702-AT3G05740.1"/>
<dbReference type="ProteomicsDB" id="226822"/>
<dbReference type="EnsemblPlants" id="AT3G05740.1">
    <property type="protein sequence ID" value="AT3G05740.1"/>
    <property type="gene ID" value="AT3G05740"/>
</dbReference>
<dbReference type="Gramene" id="AT3G05740.1">
    <property type="protein sequence ID" value="AT3G05740.1"/>
    <property type="gene ID" value="AT3G05740"/>
</dbReference>
<dbReference type="KEGG" id="ath:AT3G05740"/>
<dbReference type="Araport" id="AT3G05740"/>
<dbReference type="TAIR" id="AT3G05740">
    <property type="gene designation" value="RECQI1"/>
</dbReference>
<dbReference type="eggNOG" id="KOG0351">
    <property type="taxonomic scope" value="Eukaryota"/>
</dbReference>
<dbReference type="HOGENOM" id="CLU_001103_9_6_1"/>
<dbReference type="InParanoid" id="Q9FT74"/>
<dbReference type="PhylomeDB" id="Q9FT74"/>
<dbReference type="PRO" id="PR:Q9FT74"/>
<dbReference type="Proteomes" id="UP000006548">
    <property type="component" value="Chromosome 3"/>
</dbReference>
<dbReference type="ExpressionAtlas" id="Q9FT74">
    <property type="expression patterns" value="baseline and differential"/>
</dbReference>
<dbReference type="GO" id="GO:0005634">
    <property type="term" value="C:nucleus"/>
    <property type="evidence" value="ECO:0007669"/>
    <property type="project" value="UniProtKB-SubCell"/>
</dbReference>
<dbReference type="GO" id="GO:0005524">
    <property type="term" value="F:ATP binding"/>
    <property type="evidence" value="ECO:0007669"/>
    <property type="project" value="UniProtKB-KW"/>
</dbReference>
<dbReference type="GO" id="GO:0016887">
    <property type="term" value="F:ATP hydrolysis activity"/>
    <property type="evidence" value="ECO:0007669"/>
    <property type="project" value="RHEA"/>
</dbReference>
<dbReference type="GO" id="GO:0003677">
    <property type="term" value="F:DNA binding"/>
    <property type="evidence" value="ECO:0007669"/>
    <property type="project" value="UniProtKB-KW"/>
</dbReference>
<dbReference type="GO" id="GO:0004386">
    <property type="term" value="F:helicase activity"/>
    <property type="evidence" value="ECO:0007669"/>
    <property type="project" value="UniProtKB-KW"/>
</dbReference>
<dbReference type="GO" id="GO:0046872">
    <property type="term" value="F:metal ion binding"/>
    <property type="evidence" value="ECO:0007669"/>
    <property type="project" value="UniProtKB-KW"/>
</dbReference>
<dbReference type="GO" id="GO:0070417">
    <property type="term" value="P:cellular response to cold"/>
    <property type="evidence" value="ECO:0000270"/>
    <property type="project" value="UniProtKB"/>
</dbReference>
<dbReference type="GO" id="GO:0042631">
    <property type="term" value="P:cellular response to water deprivation"/>
    <property type="evidence" value="ECO:0000270"/>
    <property type="project" value="UniProtKB"/>
</dbReference>
<dbReference type="GO" id="GO:0006310">
    <property type="term" value="P:DNA recombination"/>
    <property type="evidence" value="ECO:0007669"/>
    <property type="project" value="InterPro"/>
</dbReference>
<dbReference type="CDD" id="cd17920">
    <property type="entry name" value="DEXHc_RecQ"/>
    <property type="match status" value="1"/>
</dbReference>
<dbReference type="CDD" id="cd18794">
    <property type="entry name" value="SF2_C_RecQ"/>
    <property type="match status" value="1"/>
</dbReference>
<dbReference type="FunFam" id="3.40.50.300:FF:000444">
    <property type="entry name" value="ATP-dependent DNA helicase"/>
    <property type="match status" value="1"/>
</dbReference>
<dbReference type="FunFam" id="3.40.50.300:FF:001421">
    <property type="entry name" value="ATP-dependent DNA helicase"/>
    <property type="match status" value="1"/>
</dbReference>
<dbReference type="Gene3D" id="3.40.50.300">
    <property type="entry name" value="P-loop containing nucleotide triphosphate hydrolases"/>
    <property type="match status" value="2"/>
</dbReference>
<dbReference type="InterPro" id="IPR011545">
    <property type="entry name" value="DEAD/DEAH_box_helicase_dom"/>
</dbReference>
<dbReference type="InterPro" id="IPR004589">
    <property type="entry name" value="DNA_helicase_ATP-dep_RecQ"/>
</dbReference>
<dbReference type="InterPro" id="IPR014001">
    <property type="entry name" value="Helicase_ATP-bd"/>
</dbReference>
<dbReference type="InterPro" id="IPR001650">
    <property type="entry name" value="Helicase_C-like"/>
</dbReference>
<dbReference type="InterPro" id="IPR027417">
    <property type="entry name" value="P-loop_NTPase"/>
</dbReference>
<dbReference type="InterPro" id="IPR032284">
    <property type="entry name" value="RecQ_Zn-bd"/>
</dbReference>
<dbReference type="NCBIfam" id="TIGR00614">
    <property type="entry name" value="recQ_fam"/>
    <property type="match status" value="1"/>
</dbReference>
<dbReference type="PANTHER" id="PTHR13710">
    <property type="entry name" value="DNA HELICASE RECQ FAMILY MEMBER"/>
    <property type="match status" value="1"/>
</dbReference>
<dbReference type="PANTHER" id="PTHR13710:SF153">
    <property type="entry name" value="RECQ-LIKE DNA HELICASE BLM"/>
    <property type="match status" value="1"/>
</dbReference>
<dbReference type="Pfam" id="PF00270">
    <property type="entry name" value="DEAD"/>
    <property type="match status" value="1"/>
</dbReference>
<dbReference type="Pfam" id="PF00271">
    <property type="entry name" value="Helicase_C"/>
    <property type="match status" value="1"/>
</dbReference>
<dbReference type="Pfam" id="PF16124">
    <property type="entry name" value="RecQ_Zn_bind"/>
    <property type="match status" value="1"/>
</dbReference>
<dbReference type="SMART" id="SM00487">
    <property type="entry name" value="DEXDc"/>
    <property type="match status" value="1"/>
</dbReference>
<dbReference type="SMART" id="SM00490">
    <property type="entry name" value="HELICc"/>
    <property type="match status" value="1"/>
</dbReference>
<dbReference type="SUPFAM" id="SSF52540">
    <property type="entry name" value="P-loop containing nucleoside triphosphate hydrolases"/>
    <property type="match status" value="1"/>
</dbReference>
<dbReference type="PROSITE" id="PS00690">
    <property type="entry name" value="DEAH_ATP_HELICASE"/>
    <property type="match status" value="1"/>
</dbReference>
<dbReference type="PROSITE" id="PS51192">
    <property type="entry name" value="HELICASE_ATP_BIND_1"/>
    <property type="match status" value="1"/>
</dbReference>
<dbReference type="PROSITE" id="PS51194">
    <property type="entry name" value="HELICASE_CTER"/>
    <property type="match status" value="1"/>
</dbReference>
<sequence>MKDQDLELEKVRLISLATKLGFDEDSAKKCLDRFVDLYGDDGRDFITVELCGDDFLAALADFEEGTEEWDDIQAIESEAQGNLAEMFDKSTNPSDNGFDTDDDDDDSRVEVHVIEDSPEPKKKPEIVELDSSSDLEDVETRFKVPRRSQTCSRSMDYSMEDSVSTISGRKPSVQISNKDHETPSYEELQALDDLEFANLVIFGNKVFRPLQHQACRASMERKDCFVLMPTGGGKSLCYQLPATLKAGVTIVISPLLSLIQDQIVALNLKFGIPATFLNSQQTSSQAAAVLQELRRDNPSCKLLYVTPEKIAGSSSFLETLRCLDRKGLLAGFVVDEAHCVSQWGHDFRPDYRELGCLKQNFPRVPVMALTATATESVCQDVLKSLRIPRAPVLKMSFDRINLKYEVIVKTKEPLKQLQELLRDRFKDQSGIVYCLSKSECVDVAKFLNEKCKVKTVYYHAGVPAKQRVDVQRKWQTGEVRIVCATIAFGMGIDKADVRFVIHNTLSKAVESYYQESGRAGRDGLQAQCICLYQKKDFSRVVCMLRNGQGRNMDRFKSAMAQAKKMQQYCELKTECRRQMLLEYFGESFDRMICKSSLNPCDNCERS</sequence>
<accession>Q9FT74</accession>
<accession>Q9M9M2</accession>
<keyword id="KW-0067">ATP-binding</keyword>
<keyword id="KW-0238">DNA-binding</keyword>
<keyword id="KW-0347">Helicase</keyword>
<keyword id="KW-0378">Hydrolase</keyword>
<keyword id="KW-0413">Isomerase</keyword>
<keyword id="KW-0460">Magnesium</keyword>
<keyword id="KW-0464">Manganese</keyword>
<keyword id="KW-0479">Metal-binding</keyword>
<keyword id="KW-0547">Nucleotide-binding</keyword>
<keyword id="KW-0539">Nucleus</keyword>
<keyword id="KW-1185">Reference proteome</keyword>
<proteinExistence type="evidence at transcript level"/>
<comment type="function">
    <text evidence="2">3'-5' DNA helicase that may play a role in the repair of DNA.</text>
</comment>
<comment type="catalytic activity">
    <reaction evidence="2">
        <text>Couples ATP hydrolysis with the unwinding of duplex DNA by translocating in the 3'-5' direction.</text>
        <dbReference type="EC" id="5.6.2.4"/>
    </reaction>
</comment>
<comment type="catalytic activity">
    <reaction>
        <text>ATP + H2O = ADP + phosphate + H(+)</text>
        <dbReference type="Rhea" id="RHEA:13065"/>
        <dbReference type="ChEBI" id="CHEBI:15377"/>
        <dbReference type="ChEBI" id="CHEBI:15378"/>
        <dbReference type="ChEBI" id="CHEBI:30616"/>
        <dbReference type="ChEBI" id="CHEBI:43474"/>
        <dbReference type="ChEBI" id="CHEBI:456216"/>
    </reaction>
</comment>
<comment type="cofactor">
    <cofactor evidence="1">
        <name>Mg(2+)</name>
        <dbReference type="ChEBI" id="CHEBI:18420"/>
    </cofactor>
    <cofactor evidence="1">
        <name>Mn(2+)</name>
        <dbReference type="ChEBI" id="CHEBI:29035"/>
    </cofactor>
</comment>
<comment type="subcellular location">
    <subcellularLocation>
        <location evidence="1">Nucleus</location>
    </subcellularLocation>
</comment>
<comment type="tissue specificity">
    <text evidence="6 7">Mostly expressed in shoots, flowers, siliques and seeds, and, to a lower extent, in roots, seedlings, leaves, shoots, shoot apical mersitem, and inflorescences.</text>
</comment>
<comment type="induction">
    <text evidence="7">By cold. Repressed by drought.</text>
</comment>
<comment type="similarity">
    <text evidence="8">Belongs to the helicase family. RecQ subfamily.</text>
</comment>
<comment type="sequence caution" evidence="8">
    <conflict type="erroneous gene model prediction">
        <sequence resource="EMBL-CDS" id="AAF26076"/>
    </conflict>
</comment>
<evidence type="ECO:0000250" key="1"/>
<evidence type="ECO:0000250" key="2">
    <source>
        <dbReference type="UniProtKB" id="Q9FT72"/>
    </source>
</evidence>
<evidence type="ECO:0000255" key="3">
    <source>
        <dbReference type="PROSITE-ProRule" id="PRU00541"/>
    </source>
</evidence>
<evidence type="ECO:0000255" key="4">
    <source>
        <dbReference type="PROSITE-ProRule" id="PRU00542"/>
    </source>
</evidence>
<evidence type="ECO:0000256" key="5">
    <source>
        <dbReference type="SAM" id="MobiDB-lite"/>
    </source>
</evidence>
<evidence type="ECO:0000269" key="6">
    <source>
    </source>
</evidence>
<evidence type="ECO:0000269" key="7">
    <source>
    </source>
</evidence>
<evidence type="ECO:0000305" key="8"/>
<feature type="chain" id="PRO_0000394527" description="ATP-dependent DNA helicase Q-like 1">
    <location>
        <begin position="1"/>
        <end position="606"/>
    </location>
</feature>
<feature type="domain" description="Helicase ATP-binding" evidence="3">
    <location>
        <begin position="215"/>
        <end position="391"/>
    </location>
</feature>
<feature type="domain" description="Helicase C-terminal" evidence="4">
    <location>
        <begin position="413"/>
        <end position="563"/>
    </location>
</feature>
<feature type="region of interest" description="Disordered" evidence="5">
    <location>
        <begin position="87"/>
        <end position="106"/>
    </location>
</feature>
<feature type="region of interest" description="Disordered" evidence="5">
    <location>
        <begin position="115"/>
        <end position="134"/>
    </location>
</feature>
<feature type="region of interest" description="Disordered" evidence="5">
    <location>
        <begin position="153"/>
        <end position="178"/>
    </location>
</feature>
<feature type="short sequence motif" description="DEAH box">
    <location>
        <begin position="335"/>
        <end position="338"/>
    </location>
</feature>
<feature type="compositionally biased region" description="Basic and acidic residues" evidence="5">
    <location>
        <begin position="115"/>
        <end position="126"/>
    </location>
</feature>
<feature type="compositionally biased region" description="Polar residues" evidence="5">
    <location>
        <begin position="153"/>
        <end position="167"/>
    </location>
</feature>
<feature type="binding site" evidence="3">
    <location>
        <begin position="228"/>
        <end position="235"/>
    </location>
    <ligand>
        <name>ATP</name>
        <dbReference type="ChEBI" id="CHEBI:30616"/>
    </ligand>
</feature>
<protein>
    <recommendedName>
        <fullName>ATP-dependent DNA helicase Q-like 1</fullName>
        <ecNumber evidence="2">5.6.2.4</ecNumber>
    </recommendedName>
    <alternativeName>
        <fullName evidence="8">DNA 3'-5' helicase RecQ1</fullName>
    </alternativeName>
    <alternativeName>
        <fullName>RecQ-like protein 1</fullName>
        <shortName>AtRecQ1</shortName>
        <shortName>AtRecQl1</shortName>
    </alternativeName>
</protein>
<name>RQL1_ARATH</name>